<evidence type="ECO:0000255" key="1"/>
<evidence type="ECO:0000255" key="2">
    <source>
        <dbReference type="PROSITE-ProRule" id="PRU00081"/>
    </source>
</evidence>
<evidence type="ECO:0000255" key="3">
    <source>
        <dbReference type="PROSITE-ProRule" id="PRU00174"/>
    </source>
</evidence>
<evidence type="ECO:0000256" key="4">
    <source>
        <dbReference type="SAM" id="MobiDB-lite"/>
    </source>
</evidence>
<evidence type="ECO:0000269" key="5">
    <source>
    </source>
</evidence>
<evidence type="ECO:0000303" key="6">
    <source>
    </source>
</evidence>
<evidence type="ECO:0000305" key="7"/>
<evidence type="ECO:0000312" key="8">
    <source>
        <dbReference type="EMBL" id="BAJ67505.1"/>
    </source>
</evidence>
<accession>A0A401ETL2</accession>
<sequence>MRVLSKSLAAMVAAATLVGGGAFAVAGTAYAADNDAITVTPNPWYANSFDGWGTSLAWFANATGSLGEESAITTNLGDDASKAKAVEYGKQLREQFYQSIFGDEGLDLNMARYNVGGGNASDVAYGYPFMRQGAAVPGTWKDDATGSGTYGNGVTTKQADKDKLAAAFDPTDDNQYDFSKSAAQDWWIERGATGDNPDITDVEAFANSAPWFLTNSGYATGGRNSGSNNLANPEKFAQYMAKNVEHLESLGANVDTVEPFNESETSYWGTPGDMASKYTDESDDNTKLINNYWDKYYSDKDRSVTPYSNALKKPQEGMHVSNAQQQQTITALAEALKDNDDTIIAATDATNSADFVKSYNQYPQAIKDLIGQYNVHAYSDSNQMQSRDIAQADGKKLSMSEVDGSWQSGSYNPYGFDNALGMMSKISSNVTRLQSKDFTFWQVVEDLYNMQMGSNVNPAGENTNWGTVLIDFDCTVAGMDGKLYSERRVNNNGGTTDGLEPCTVIANAKYNGVKAITHFIHAGDKVIANNDEDNNMTATSDDGKTQTVIHRNSGTSDQTFVIDLSKYGEIADNAYGELYLTTETSAEDKNAGVDSATPEVFAKTSNVKQAEGSVMIDKAAKTATVTVPARSIASIQLTGVTGYAKDAAVETGDTYQLVGKQSGKAVADTTSGDSALSLANVASDAENAKKQTWTFTQIEQPTDSERPDLKAYVITNAEGKVLVSKDGTNALSNETVGAAKSDPAAKWILNTSDGSTYQLLNAATKTNLDVDNSGTTVGTKVGLWQSPSGTSPSANQTWTLRNVTPTSQKTVNVQTAVNEKAVLPVEVTLYYTWGEGKATVANWDTSKVDVAKEGAYEATATATDVYGNEFNVTATVYVGALTVSDPVSATVLAGTSASEAKAALEAAPVYLHVKASPAFEGDAAKVTWNFDGLDTKLADAKAGDNIAVTGTYQLDDATTIALKGAIYVTAATPENVADTASNLTVTNQQTEYSKGDQWKKLTDGDTSAEAWVTWNSAGDYSASPTATIDFGSECELSSVTITYGDKAPASAKAEYTTDGETWMQFGSDVKPAAGQTVTFKADKGTVNATKMRIVNTVNNDYMNATEIQAFVTPVQGAAKNIAAASGTNFSVNFQEGASASKAIDGDTTSKGWSTWASTASTVDPVATFTFDEAQTITEVKTFFYYDGRASWPKSQTLEYQDEAGEWHGVGTKDGWKIQAGDAGSGSDGITAADTPTVDFVLGTPVKAKAIRLTNTLQDTKVYINVAEIQVFAQDSTVLTPQPASDATLGDLRLDGETVEGFDPSKTDYTVDLPVDAEANPVLQAFATDNAAAVKVTGDAVENGKLGGKAAITVTSADESETKTYTVTFNAFTLASLKVIGPTKTEYAIGDKLDTAGLKVTAVYQSGDKTKEVPVALDDPQLAIGSFDSTTAGKKAITVSYRGVTATFNVTVKANAVAPGPEEQKPGNTNKPGATGNGNKNTVANTGSSVAAIAGAVALLAAAAGALFMLRKRA</sequence>
<gene>
    <name evidence="6" type="primary">bl1,6Gal</name>
    <name evidence="8" type="ordered locus">BLLJ_1841</name>
</gene>
<name>EXGAL_BIFL2</name>
<proteinExistence type="evidence at protein level"/>
<feature type="signal peptide" evidence="1">
    <location>
        <begin position="1"/>
        <end position="31"/>
    </location>
</feature>
<feature type="chain" id="PRO_5019526962" description="Exo-beta-1,6-galactobiohydrolase" evidence="1">
    <location>
        <begin position="32"/>
        <end position="1513"/>
    </location>
</feature>
<feature type="transmembrane region" description="Helical" evidence="1">
    <location>
        <begin position="1489"/>
        <end position="1509"/>
    </location>
</feature>
<feature type="domain" description="Ricin B-type lectin" evidence="3">
    <location>
        <begin position="666"/>
        <end position="801"/>
    </location>
</feature>
<feature type="domain" description="F5/8 type C 1" evidence="2">
    <location>
        <begin position="965"/>
        <end position="1112"/>
    </location>
</feature>
<feature type="domain" description="F5/8 type C 2" evidence="2">
    <location>
        <begin position="1116"/>
        <end position="1273"/>
    </location>
</feature>
<feature type="region of interest" description="Disordered" evidence="4">
    <location>
        <begin position="1456"/>
        <end position="1480"/>
    </location>
</feature>
<feature type="compositionally biased region" description="Polar residues" evidence="4">
    <location>
        <begin position="1465"/>
        <end position="1480"/>
    </location>
</feature>
<dbReference type="EC" id="3.2.1.213" evidence="5"/>
<dbReference type="EMBL" id="BR001494">
    <property type="protein sequence ID" value="FAA01256.1"/>
    <property type="molecule type" value="Genomic_DNA"/>
</dbReference>
<dbReference type="EMBL" id="AP010888">
    <property type="protein sequence ID" value="BAJ67505.1"/>
    <property type="molecule type" value="Genomic_DNA"/>
</dbReference>
<dbReference type="RefSeq" id="WP_013583001.1">
    <property type="nucleotide sequence ID" value="NC_015067.1"/>
</dbReference>
<dbReference type="GeneID" id="69579054"/>
<dbReference type="KEGG" id="blm:BLLJ_1841"/>
<dbReference type="BioCyc" id="MetaCyc:MONOMER-21026"/>
<dbReference type="BRENDA" id="3.2.1.145">
    <property type="organism ID" value="10148"/>
</dbReference>
<dbReference type="BRENDA" id="3.2.1.213">
    <property type="organism ID" value="10148"/>
</dbReference>
<dbReference type="BRENDA" id="3.2.1.55">
    <property type="organism ID" value="10148"/>
</dbReference>
<dbReference type="GO" id="GO:0005886">
    <property type="term" value="C:plasma membrane"/>
    <property type="evidence" value="ECO:0007669"/>
    <property type="project" value="UniProtKB-SubCell"/>
</dbReference>
<dbReference type="GO" id="GO:0004553">
    <property type="term" value="F:hydrolase activity, hydrolyzing O-glycosyl compounds"/>
    <property type="evidence" value="ECO:0007669"/>
    <property type="project" value="InterPro"/>
</dbReference>
<dbReference type="CDD" id="cd00161">
    <property type="entry name" value="beta-trefoil_Ricin-like"/>
    <property type="match status" value="1"/>
</dbReference>
<dbReference type="Gene3D" id="2.60.40.3630">
    <property type="match status" value="1"/>
</dbReference>
<dbReference type="Gene3D" id="2.80.10.50">
    <property type="match status" value="1"/>
</dbReference>
<dbReference type="Gene3D" id="2.60.120.260">
    <property type="entry name" value="Galactose-binding domain-like"/>
    <property type="match status" value="2"/>
</dbReference>
<dbReference type="Gene3D" id="3.20.20.80">
    <property type="entry name" value="Glycosidases"/>
    <property type="match status" value="1"/>
</dbReference>
<dbReference type="InterPro" id="IPR039743">
    <property type="entry name" value="6GAL/EXGAL"/>
</dbReference>
<dbReference type="InterPro" id="IPR011081">
    <property type="entry name" value="Big_4"/>
</dbReference>
<dbReference type="InterPro" id="IPR025883">
    <property type="entry name" value="Cadherin-like_b_sandwich"/>
</dbReference>
<dbReference type="InterPro" id="IPR000421">
    <property type="entry name" value="FA58C"/>
</dbReference>
<dbReference type="InterPro" id="IPR008979">
    <property type="entry name" value="Galactose-bd-like_sf"/>
</dbReference>
<dbReference type="InterPro" id="IPR017853">
    <property type="entry name" value="Glycoside_hydrolase_SF"/>
</dbReference>
<dbReference type="InterPro" id="IPR022038">
    <property type="entry name" value="Ig-like_bact"/>
</dbReference>
<dbReference type="InterPro" id="IPR035992">
    <property type="entry name" value="Ricin_B-like_lectins"/>
</dbReference>
<dbReference type="InterPro" id="IPR000772">
    <property type="entry name" value="Ricin_B_lectin"/>
</dbReference>
<dbReference type="PANTHER" id="PTHR42767">
    <property type="entry name" value="ENDO-BETA-1,6-GALACTANASE"/>
    <property type="match status" value="1"/>
</dbReference>
<dbReference type="PANTHER" id="PTHR42767:SF1">
    <property type="entry name" value="ENDO-BETA-1,6-GALACTANASE-LIKE DOMAIN-CONTAINING PROTEIN"/>
    <property type="match status" value="1"/>
</dbReference>
<dbReference type="Pfam" id="PF07523">
    <property type="entry name" value="Big_3"/>
    <property type="match status" value="1"/>
</dbReference>
<dbReference type="Pfam" id="PF07532">
    <property type="entry name" value="Big_4"/>
    <property type="match status" value="1"/>
</dbReference>
<dbReference type="Pfam" id="PF12733">
    <property type="entry name" value="Cadherin-like"/>
    <property type="match status" value="1"/>
</dbReference>
<dbReference type="Pfam" id="PF00754">
    <property type="entry name" value="F5_F8_type_C"/>
    <property type="match status" value="2"/>
</dbReference>
<dbReference type="Pfam" id="PF14200">
    <property type="entry name" value="RicinB_lectin_2"/>
    <property type="match status" value="1"/>
</dbReference>
<dbReference type="SUPFAM" id="SSF51445">
    <property type="entry name" value="(Trans)glycosidases"/>
    <property type="match status" value="1"/>
</dbReference>
<dbReference type="SUPFAM" id="SSF49785">
    <property type="entry name" value="Galactose-binding domain-like"/>
    <property type="match status" value="2"/>
</dbReference>
<dbReference type="SUPFAM" id="SSF50370">
    <property type="entry name" value="Ricin B-like lectins"/>
    <property type="match status" value="1"/>
</dbReference>
<dbReference type="PROSITE" id="PS50022">
    <property type="entry name" value="FA58C_3"/>
    <property type="match status" value="1"/>
</dbReference>
<dbReference type="PROSITE" id="PS50231">
    <property type="entry name" value="RICIN_B_LECTIN"/>
    <property type="match status" value="1"/>
</dbReference>
<organism>
    <name type="scientific">Bifidobacterium longum subsp. longum (strain ATCC 15707 / DSM 20219 / JCM 1217 / NCTC 11818 / E194b)</name>
    <dbReference type="NCBI Taxonomy" id="565042"/>
    <lineage>
        <taxon>Bacteria</taxon>
        <taxon>Bacillati</taxon>
        <taxon>Actinomycetota</taxon>
        <taxon>Actinomycetes</taxon>
        <taxon>Bifidobacteriales</taxon>
        <taxon>Bifidobacteriaceae</taxon>
        <taxon>Bifidobacterium</taxon>
    </lineage>
</organism>
<reference key="1">
    <citation type="journal article" date="2019" name="Appl. Microbiol. Biotechnol.">
        <title>Degradative enzymes for type II arabinogalactan side chains in Bifidobacterium longum subsp. longum.</title>
        <authorList>
            <person name="Fujita K."/>
            <person name="Sakamoto A."/>
            <person name="Kaneko S."/>
            <person name="Kotake T."/>
            <person name="Tsumuraya Y."/>
            <person name="Kitahara K."/>
        </authorList>
    </citation>
    <scope>NUCLEOTIDE SEQUENCE [GENOMIC DNA]</scope>
    <scope>FUNCTION</scope>
    <scope>CATALYTIC ACTIVITY</scope>
    <scope>BIOPHYSICOCHEMICAL PROPERTIES</scope>
    <source>
        <strain>ATCC 15707 / DSM 20219 / CCUG 28903 / JCM 1217 / NCIMB 702259 / NCTC 11818 / E194b</strain>
    </source>
</reference>
<reference key="2">
    <citation type="journal article" date="2011" name="Nature">
        <title>Bifidobacteria can protect from enteropathogenic infection through production of acetate.</title>
        <authorList>
            <person name="Fukuda S."/>
            <person name="Toh H."/>
            <person name="Hase K."/>
            <person name="Oshima K."/>
            <person name="Nakanishi Y."/>
            <person name="Yoshimura K."/>
            <person name="Tobe T."/>
            <person name="Clarke J.M."/>
            <person name="Topping D.L."/>
            <person name="Suzuki T."/>
            <person name="Taylor T.D."/>
            <person name="Itoh K."/>
            <person name="Kikuchi J."/>
            <person name="Morita H."/>
            <person name="Hattori M."/>
            <person name="Ohno H."/>
        </authorList>
    </citation>
    <scope>NUCLEOTIDE SEQUENCE [LARGE SCALE GENOMIC DNA]</scope>
    <source>
        <strain>ATCC 15707 / DSM 20219 / CCUG 28903 / JCM 1217 / NCIMB 702259 / NCTC 11818 / E194b</strain>
    </source>
</reference>
<protein>
    <recommendedName>
        <fullName evidence="6">Exo-beta-1,6-galactobiohydrolase</fullName>
        <ecNumber evidence="5">3.2.1.213</ecNumber>
    </recommendedName>
    <alternativeName>
        <fullName evidence="7">Galactan exo-1,6-beta-galactobiohydrolase (non-reducing end)</fullName>
    </alternativeName>
</protein>
<keyword id="KW-0119">Carbohydrate metabolism</keyword>
<keyword id="KW-1003">Cell membrane</keyword>
<keyword id="KW-0326">Glycosidase</keyword>
<keyword id="KW-0378">Hydrolase</keyword>
<keyword id="KW-0472">Membrane</keyword>
<keyword id="KW-0677">Repeat</keyword>
<keyword id="KW-0732">Signal</keyword>
<keyword id="KW-0812">Transmembrane</keyword>
<keyword id="KW-1133">Transmembrane helix</keyword>
<comment type="function">
    <text evidence="5">Involved in the type II arabinogalactan (AG) side chains degradation (PubMed:30564851). Specifically releases the non-reducing terminal beta-1,6-galactobiose (beta-1,6-Gal2) from both dearabinosylated larch AG and polymeric beta-1,6-galactan chains by an exo-mode of action (PubMed:30564851). Shows lower activity with larch AG, and very weak activity with dearabinosylated gum arabic, gum arabic and potato galactan (PubMed:30564851). Can probably release beta-1,6-Gal2 from the internal side chains of type II AG (PubMed:30564851).</text>
</comment>
<comment type="catalytic activity">
    <reaction evidence="5">
        <text>Hydrolysis of (1-&gt;6)-beta-D-galactosidic linkages in arabinogalactan proteins and (1-&gt;3):(1-&gt;6)-beta-galactans to yield (1-&gt;6)-beta-galactobiose as the final product.</text>
        <dbReference type="EC" id="3.2.1.213"/>
    </reaction>
</comment>
<comment type="biophysicochemical properties">
    <kinetics>
        <KM evidence="5">0.549 mM for beta-1,6-Gal3</KM>
        <text evidence="5">kcat is 261 sec(-1) with beta-1,6-Gal3 as substrate.</text>
    </kinetics>
    <phDependence>
        <text evidence="5">Optimum pH is 4.5 with beta-1,6-Gal3 as substrate.</text>
    </phDependence>
    <temperatureDependence>
        <text evidence="5">Optimum temperature is 40 degrees Celsius with beta-1,6-Gal3 as substrate.</text>
    </temperatureDependence>
</comment>
<comment type="subcellular location">
    <subcellularLocation>
        <location evidence="7">Cell membrane</location>
        <topology evidence="1">Single-pass membrane protein</topology>
    </subcellularLocation>
</comment>
<comment type="similarity">
    <text evidence="7">Belongs to the glycosyl hydrolase 30 family.</text>
</comment>